<proteinExistence type="inferred from homology"/>
<name>HIS2_STAAS</name>
<comment type="catalytic activity">
    <reaction>
        <text>1-(5-phospho-beta-D-ribosyl)-ATP + H2O = 1-(5-phospho-beta-D-ribosyl)-5'-AMP + diphosphate + H(+)</text>
        <dbReference type="Rhea" id="RHEA:22828"/>
        <dbReference type="ChEBI" id="CHEBI:15377"/>
        <dbReference type="ChEBI" id="CHEBI:15378"/>
        <dbReference type="ChEBI" id="CHEBI:33019"/>
        <dbReference type="ChEBI" id="CHEBI:59457"/>
        <dbReference type="ChEBI" id="CHEBI:73183"/>
        <dbReference type="EC" id="3.6.1.31"/>
    </reaction>
</comment>
<comment type="catalytic activity">
    <reaction>
        <text>1-(5-phospho-beta-D-ribosyl)-5'-AMP + H2O = 1-(5-phospho-beta-D-ribosyl)-5-[(5-phospho-beta-D-ribosylamino)methylideneamino]imidazole-4-carboxamide</text>
        <dbReference type="Rhea" id="RHEA:20049"/>
        <dbReference type="ChEBI" id="CHEBI:15377"/>
        <dbReference type="ChEBI" id="CHEBI:58435"/>
        <dbReference type="ChEBI" id="CHEBI:59457"/>
        <dbReference type="EC" id="3.5.4.19"/>
    </reaction>
</comment>
<comment type="pathway">
    <text>Amino-acid biosynthesis; L-histidine biosynthesis; L-histidine from 5-phospho-alpha-D-ribose 1-diphosphate: step 2/9.</text>
</comment>
<comment type="pathway">
    <text>Amino-acid biosynthesis; L-histidine biosynthesis; L-histidine from 5-phospho-alpha-D-ribose 1-diphosphate: step 3/9.</text>
</comment>
<comment type="subcellular location">
    <subcellularLocation>
        <location evidence="1">Cytoplasm</location>
    </subcellularLocation>
</comment>
<comment type="similarity">
    <text evidence="2">In the N-terminal section; belongs to the PRA-CH family.</text>
</comment>
<comment type="similarity">
    <text evidence="2">In the C-terminal section; belongs to the PRA-PH family.</text>
</comment>
<dbReference type="EC" id="3.5.4.19"/>
<dbReference type="EC" id="3.6.1.31"/>
<dbReference type="EMBL" id="BX571857">
    <property type="protein sequence ID" value="CAG44374.1"/>
    <property type="molecule type" value="Genomic_DNA"/>
</dbReference>
<dbReference type="SMR" id="Q6G603"/>
<dbReference type="KEGG" id="sas:SAS2557"/>
<dbReference type="HOGENOM" id="CLU_048577_3_1_9"/>
<dbReference type="UniPathway" id="UPA00031">
    <property type="reaction ID" value="UER00007"/>
</dbReference>
<dbReference type="UniPathway" id="UPA00031">
    <property type="reaction ID" value="UER00008"/>
</dbReference>
<dbReference type="GO" id="GO:0005737">
    <property type="term" value="C:cytoplasm"/>
    <property type="evidence" value="ECO:0007669"/>
    <property type="project" value="UniProtKB-SubCell"/>
</dbReference>
<dbReference type="GO" id="GO:0005524">
    <property type="term" value="F:ATP binding"/>
    <property type="evidence" value="ECO:0007669"/>
    <property type="project" value="UniProtKB-KW"/>
</dbReference>
<dbReference type="GO" id="GO:0004635">
    <property type="term" value="F:phosphoribosyl-AMP cyclohydrolase activity"/>
    <property type="evidence" value="ECO:0007669"/>
    <property type="project" value="UniProtKB-UniRule"/>
</dbReference>
<dbReference type="GO" id="GO:0004636">
    <property type="term" value="F:phosphoribosyl-ATP diphosphatase activity"/>
    <property type="evidence" value="ECO:0007669"/>
    <property type="project" value="UniProtKB-UniRule"/>
</dbReference>
<dbReference type="GO" id="GO:0000105">
    <property type="term" value="P:L-histidine biosynthetic process"/>
    <property type="evidence" value="ECO:0007669"/>
    <property type="project" value="UniProtKB-UniRule"/>
</dbReference>
<dbReference type="CDD" id="cd11534">
    <property type="entry name" value="NTP-PPase_HisIE_like"/>
    <property type="match status" value="1"/>
</dbReference>
<dbReference type="FunFam" id="3.10.20.810:FF:000001">
    <property type="entry name" value="Histidine biosynthesis bifunctional protein HisIE"/>
    <property type="match status" value="1"/>
</dbReference>
<dbReference type="Gene3D" id="1.10.287.1080">
    <property type="entry name" value="MazG-like"/>
    <property type="match status" value="1"/>
</dbReference>
<dbReference type="Gene3D" id="3.10.20.810">
    <property type="entry name" value="Phosphoribosyl-AMP cyclohydrolase"/>
    <property type="match status" value="1"/>
</dbReference>
<dbReference type="HAMAP" id="MF_01020">
    <property type="entry name" value="HisE"/>
    <property type="match status" value="1"/>
</dbReference>
<dbReference type="HAMAP" id="MF_01021">
    <property type="entry name" value="HisI"/>
    <property type="match status" value="1"/>
</dbReference>
<dbReference type="HAMAP" id="MF_01019">
    <property type="entry name" value="HisIE"/>
    <property type="match status" value="1"/>
</dbReference>
<dbReference type="InterPro" id="IPR023019">
    <property type="entry name" value="His_synth_HisIE"/>
</dbReference>
<dbReference type="InterPro" id="IPR008179">
    <property type="entry name" value="HisE"/>
</dbReference>
<dbReference type="InterPro" id="IPR026660">
    <property type="entry name" value="PRA-CH"/>
</dbReference>
<dbReference type="InterPro" id="IPR021130">
    <property type="entry name" value="PRib-ATP_PPHydrolase-like"/>
</dbReference>
<dbReference type="InterPro" id="IPR002496">
    <property type="entry name" value="PRib_AMP_CycHydrolase_dom"/>
</dbReference>
<dbReference type="InterPro" id="IPR038019">
    <property type="entry name" value="PRib_AMP_CycHydrolase_sf"/>
</dbReference>
<dbReference type="NCBIfam" id="TIGR03188">
    <property type="entry name" value="histidine_hisI"/>
    <property type="match status" value="1"/>
</dbReference>
<dbReference type="NCBIfam" id="NF000768">
    <property type="entry name" value="PRK00051.1"/>
    <property type="match status" value="1"/>
</dbReference>
<dbReference type="NCBIfam" id="NF002747">
    <property type="entry name" value="PRK02759.1"/>
    <property type="match status" value="1"/>
</dbReference>
<dbReference type="PANTHER" id="PTHR42945">
    <property type="entry name" value="HISTIDINE BIOSYNTHESIS BIFUNCTIONAL PROTEIN"/>
    <property type="match status" value="1"/>
</dbReference>
<dbReference type="PANTHER" id="PTHR42945:SF9">
    <property type="entry name" value="HISTIDINE BIOSYNTHESIS BIFUNCTIONAL PROTEIN HISIE"/>
    <property type="match status" value="1"/>
</dbReference>
<dbReference type="Pfam" id="PF01502">
    <property type="entry name" value="PRA-CH"/>
    <property type="match status" value="1"/>
</dbReference>
<dbReference type="Pfam" id="PF01503">
    <property type="entry name" value="PRA-PH"/>
    <property type="match status" value="1"/>
</dbReference>
<dbReference type="SUPFAM" id="SSF101386">
    <property type="entry name" value="all-alpha NTP pyrophosphatases"/>
    <property type="match status" value="1"/>
</dbReference>
<dbReference type="SUPFAM" id="SSF141734">
    <property type="entry name" value="HisI-like"/>
    <property type="match status" value="1"/>
</dbReference>
<organism>
    <name type="scientific">Staphylococcus aureus (strain MSSA476)</name>
    <dbReference type="NCBI Taxonomy" id="282459"/>
    <lineage>
        <taxon>Bacteria</taxon>
        <taxon>Bacillati</taxon>
        <taxon>Bacillota</taxon>
        <taxon>Bacilli</taxon>
        <taxon>Bacillales</taxon>
        <taxon>Staphylococcaceae</taxon>
        <taxon>Staphylococcus</taxon>
    </lineage>
</organism>
<protein>
    <recommendedName>
        <fullName>Histidine biosynthesis bifunctional protein HisIE</fullName>
    </recommendedName>
    <domain>
        <recommendedName>
            <fullName>Phosphoribosyl-AMP cyclohydrolase</fullName>
            <shortName>PRA-CH</shortName>
            <ecNumber>3.5.4.19</ecNumber>
        </recommendedName>
    </domain>
    <domain>
        <recommendedName>
            <fullName>Phosphoribosyl-ATP pyrophosphatase</fullName>
            <shortName>PRA-PH</shortName>
            <ecNumber>3.6.1.31</ecNumber>
        </recommendedName>
    </domain>
</protein>
<reference key="1">
    <citation type="journal article" date="2004" name="Proc. Natl. Acad. Sci. U.S.A.">
        <title>Complete genomes of two clinical Staphylococcus aureus strains: evidence for the rapid evolution of virulence and drug resistance.</title>
        <authorList>
            <person name="Holden M.T.G."/>
            <person name="Feil E.J."/>
            <person name="Lindsay J.A."/>
            <person name="Peacock S.J."/>
            <person name="Day N.P.J."/>
            <person name="Enright M.C."/>
            <person name="Foster T.J."/>
            <person name="Moore C.E."/>
            <person name="Hurst L."/>
            <person name="Atkin R."/>
            <person name="Barron A."/>
            <person name="Bason N."/>
            <person name="Bentley S.D."/>
            <person name="Chillingworth C."/>
            <person name="Chillingworth T."/>
            <person name="Churcher C."/>
            <person name="Clark L."/>
            <person name="Corton C."/>
            <person name="Cronin A."/>
            <person name="Doggett J."/>
            <person name="Dowd L."/>
            <person name="Feltwell T."/>
            <person name="Hance Z."/>
            <person name="Harris B."/>
            <person name="Hauser H."/>
            <person name="Holroyd S."/>
            <person name="Jagels K."/>
            <person name="James K.D."/>
            <person name="Lennard N."/>
            <person name="Line A."/>
            <person name="Mayes R."/>
            <person name="Moule S."/>
            <person name="Mungall K."/>
            <person name="Ormond D."/>
            <person name="Quail M.A."/>
            <person name="Rabbinowitsch E."/>
            <person name="Rutherford K.M."/>
            <person name="Sanders M."/>
            <person name="Sharp S."/>
            <person name="Simmonds M."/>
            <person name="Stevens K."/>
            <person name="Whitehead S."/>
            <person name="Barrell B.G."/>
            <person name="Spratt B.G."/>
            <person name="Parkhill J."/>
        </authorList>
    </citation>
    <scope>NUCLEOTIDE SEQUENCE [LARGE SCALE GENOMIC DNA]</scope>
    <source>
        <strain>MSSA476</strain>
    </source>
</reference>
<sequence>MTNYKIDFSKGLVPAILQDNQTKQVLMLGYMNQEAFDKTIEDGVVCFYSRSKQRLWTKGETSGHTQRVKDIHVDCDNDTILIDVIPNGPTCHTGSQSCFNTEVPFSVQTLAQTVQDSAQSNNEKSYTKYLLTEGIEKITKKYGEEAFEVVIEAIKGDKKAFVSEVADELYHLFVLMHALGVDFSEIEAELARRHHKRNNFKGERQNIEQW</sequence>
<feature type="chain" id="PRO_0000136434" description="Histidine biosynthesis bifunctional protein HisIE">
    <location>
        <begin position="1"/>
        <end position="210"/>
    </location>
</feature>
<feature type="region of interest" description="Phosphoribosyl-AMP cyclohydrolase">
    <location>
        <begin position="1"/>
        <end position="106"/>
    </location>
</feature>
<feature type="region of interest" description="Phosphoribosyl-ATP pyrophosphohydrolase">
    <location>
        <begin position="107"/>
        <end position="210"/>
    </location>
</feature>
<keyword id="KW-0028">Amino-acid biosynthesis</keyword>
<keyword id="KW-0067">ATP-binding</keyword>
<keyword id="KW-0963">Cytoplasm</keyword>
<keyword id="KW-0368">Histidine biosynthesis</keyword>
<keyword id="KW-0378">Hydrolase</keyword>
<keyword id="KW-0511">Multifunctional enzyme</keyword>
<keyword id="KW-0547">Nucleotide-binding</keyword>
<accession>Q6G603</accession>
<gene>
    <name type="primary">hisI</name>
    <name type="synonym">hisIE</name>
    <name type="ordered locus">SAS2557</name>
</gene>
<evidence type="ECO:0000250" key="1"/>
<evidence type="ECO:0000305" key="2"/>